<proteinExistence type="evidence at protein level"/>
<organism>
    <name type="scientific">Haemophilus influenzae (strain ATCC 51907 / DSM 11121 / KW20 / Rd)</name>
    <dbReference type="NCBI Taxonomy" id="71421"/>
    <lineage>
        <taxon>Bacteria</taxon>
        <taxon>Pseudomonadati</taxon>
        <taxon>Pseudomonadota</taxon>
        <taxon>Gammaproteobacteria</taxon>
        <taxon>Pasteurellales</taxon>
        <taxon>Pasteurellaceae</taxon>
        <taxon>Haemophilus</taxon>
    </lineage>
</organism>
<reference key="1">
    <citation type="journal article" date="1995" name="Science">
        <title>Whole-genome random sequencing and assembly of Haemophilus influenzae Rd.</title>
        <authorList>
            <person name="Fleischmann R.D."/>
            <person name="Adams M.D."/>
            <person name="White O."/>
            <person name="Clayton R.A."/>
            <person name="Kirkness E.F."/>
            <person name="Kerlavage A.R."/>
            <person name="Bult C.J."/>
            <person name="Tomb J.-F."/>
            <person name="Dougherty B.A."/>
            <person name="Merrick J.M."/>
            <person name="McKenney K."/>
            <person name="Sutton G.G."/>
            <person name="FitzHugh W."/>
            <person name="Fields C.A."/>
            <person name="Gocayne J.D."/>
            <person name="Scott J.D."/>
            <person name="Shirley R."/>
            <person name="Liu L.-I."/>
            <person name="Glodek A."/>
            <person name="Kelley J.M."/>
            <person name="Weidman J.F."/>
            <person name="Phillips C.A."/>
            <person name="Spriggs T."/>
            <person name="Hedblom E."/>
            <person name="Cotton M.D."/>
            <person name="Utterback T.R."/>
            <person name="Hanna M.C."/>
            <person name="Nguyen D.T."/>
            <person name="Saudek D.M."/>
            <person name="Brandon R.C."/>
            <person name="Fine L.D."/>
            <person name="Fritchman J.L."/>
            <person name="Fuhrmann J.L."/>
            <person name="Geoghagen N.S.M."/>
            <person name="Gnehm C.L."/>
            <person name="McDonald L.A."/>
            <person name="Small K.V."/>
            <person name="Fraser C.M."/>
            <person name="Smith H.O."/>
            <person name="Venter J.C."/>
        </authorList>
    </citation>
    <scope>NUCLEOTIDE SEQUENCE [LARGE SCALE GENOMIC DNA]</scope>
    <source>
        <strain>ATCC 51907 / DSM 11121 / KW20 / Rd</strain>
    </source>
</reference>
<reference key="2">
    <citation type="journal article" date="2000" name="Electrophoresis">
        <title>Two-dimensional map of the proteome of Haemophilus influenzae.</title>
        <authorList>
            <person name="Langen H."/>
            <person name="Takacs B."/>
            <person name="Evers S."/>
            <person name="Berndt P."/>
            <person name="Lahm H.W."/>
            <person name="Wipf B."/>
            <person name="Gray C."/>
            <person name="Fountoulakis M."/>
        </authorList>
    </citation>
    <scope>IDENTIFICATION BY MASS SPECTROMETRY</scope>
    <source>
        <strain>ATCC 51907 / DSM 11121 / KW20 / Rd</strain>
    </source>
</reference>
<accession>P44910</accession>
<feature type="chain" id="PRO_0000091554" description="Large ribosomal subunit assembly factor BipA">
    <location>
        <begin position="1"/>
        <end position="616"/>
    </location>
</feature>
<feature type="domain" description="tr-type G" evidence="1">
    <location>
        <begin position="8"/>
        <end position="204"/>
    </location>
</feature>
<feature type="binding site" evidence="1">
    <location>
        <begin position="20"/>
        <end position="25"/>
    </location>
    <ligand>
        <name>GTP</name>
        <dbReference type="ChEBI" id="CHEBI:37565"/>
    </ligand>
</feature>
<feature type="binding site" evidence="1">
    <location>
        <begin position="134"/>
        <end position="137"/>
    </location>
    <ligand>
        <name>GTP</name>
        <dbReference type="ChEBI" id="CHEBI:37565"/>
    </ligand>
</feature>
<dbReference type="EC" id="3.6.5.-" evidence="1"/>
<dbReference type="EMBL" id="L42023">
    <property type="protein sequence ID" value="AAC22523.1"/>
    <property type="molecule type" value="Genomic_DNA"/>
</dbReference>
<dbReference type="PIR" id="G64160">
    <property type="entry name" value="G64160"/>
</dbReference>
<dbReference type="RefSeq" id="NP_439024.1">
    <property type="nucleotide sequence ID" value="NC_000907.1"/>
</dbReference>
<dbReference type="SMR" id="P44910"/>
<dbReference type="STRING" id="71421.HI_0864"/>
<dbReference type="EnsemblBacteria" id="AAC22523">
    <property type="protein sequence ID" value="AAC22523"/>
    <property type="gene ID" value="HI_0864"/>
</dbReference>
<dbReference type="KEGG" id="hin:HI_0864"/>
<dbReference type="PATRIC" id="fig|71421.8.peg.905"/>
<dbReference type="eggNOG" id="COG1217">
    <property type="taxonomic scope" value="Bacteria"/>
</dbReference>
<dbReference type="HOGENOM" id="CLU_017016_4_0_6"/>
<dbReference type="OrthoDB" id="9801472at2"/>
<dbReference type="PhylomeDB" id="P44910"/>
<dbReference type="BioCyc" id="HINF71421:G1GJ1-905-MONOMER"/>
<dbReference type="Proteomes" id="UP000000579">
    <property type="component" value="Chromosome"/>
</dbReference>
<dbReference type="GO" id="GO:0005829">
    <property type="term" value="C:cytosol"/>
    <property type="evidence" value="ECO:0000318"/>
    <property type="project" value="GO_Central"/>
</dbReference>
<dbReference type="GO" id="GO:1990904">
    <property type="term" value="C:ribonucleoprotein complex"/>
    <property type="evidence" value="ECO:0000318"/>
    <property type="project" value="GO_Central"/>
</dbReference>
<dbReference type="GO" id="GO:0005525">
    <property type="term" value="F:GTP binding"/>
    <property type="evidence" value="ECO:0007669"/>
    <property type="project" value="UniProtKB-UniRule"/>
</dbReference>
<dbReference type="GO" id="GO:0003924">
    <property type="term" value="F:GTPase activity"/>
    <property type="evidence" value="ECO:0000318"/>
    <property type="project" value="GO_Central"/>
</dbReference>
<dbReference type="GO" id="GO:0097216">
    <property type="term" value="F:guanosine tetraphosphate binding"/>
    <property type="evidence" value="ECO:0007669"/>
    <property type="project" value="UniProtKB-ARBA"/>
</dbReference>
<dbReference type="GO" id="GO:0043022">
    <property type="term" value="F:ribosome binding"/>
    <property type="evidence" value="ECO:0007669"/>
    <property type="project" value="UniProtKB-UniRule"/>
</dbReference>
<dbReference type="GO" id="GO:0019843">
    <property type="term" value="F:rRNA binding"/>
    <property type="evidence" value="ECO:0007669"/>
    <property type="project" value="UniProtKB-KW"/>
</dbReference>
<dbReference type="GO" id="GO:0000049">
    <property type="term" value="F:tRNA binding"/>
    <property type="evidence" value="ECO:0007669"/>
    <property type="project" value="UniProtKB-KW"/>
</dbReference>
<dbReference type="GO" id="GO:0000027">
    <property type="term" value="P:ribosomal large subunit assembly"/>
    <property type="evidence" value="ECO:0007669"/>
    <property type="project" value="UniProtKB-UniRule"/>
</dbReference>
<dbReference type="CDD" id="cd16263">
    <property type="entry name" value="BipA_III"/>
    <property type="match status" value="1"/>
</dbReference>
<dbReference type="CDD" id="cd03710">
    <property type="entry name" value="BipA_TypA_C"/>
    <property type="match status" value="1"/>
</dbReference>
<dbReference type="CDD" id="cd03691">
    <property type="entry name" value="BipA_TypA_II"/>
    <property type="match status" value="1"/>
</dbReference>
<dbReference type="CDD" id="cd01891">
    <property type="entry name" value="TypA_BipA"/>
    <property type="match status" value="1"/>
</dbReference>
<dbReference type="FunFam" id="2.40.30.10:FF:000016">
    <property type="entry name" value="GTP-binding protein TypA"/>
    <property type="match status" value="1"/>
</dbReference>
<dbReference type="FunFam" id="2.40.50.250:FF:000001">
    <property type="entry name" value="GTP-binding protein TypA"/>
    <property type="match status" value="1"/>
</dbReference>
<dbReference type="FunFam" id="3.30.70.240:FF:000002">
    <property type="entry name" value="GTP-binding protein TypA"/>
    <property type="match status" value="1"/>
</dbReference>
<dbReference type="FunFam" id="3.30.70.870:FF:000003">
    <property type="entry name" value="GTP-binding protein TypA"/>
    <property type="match status" value="1"/>
</dbReference>
<dbReference type="FunFam" id="3.40.50.300:FF:000055">
    <property type="entry name" value="GTP-binding protein TypA"/>
    <property type="match status" value="1"/>
</dbReference>
<dbReference type="Gene3D" id="3.30.70.240">
    <property type="match status" value="1"/>
</dbReference>
<dbReference type="Gene3D" id="2.40.50.250">
    <property type="entry name" value="bipa protein"/>
    <property type="match status" value="1"/>
</dbReference>
<dbReference type="Gene3D" id="3.30.70.870">
    <property type="entry name" value="Elongation Factor G (Translational Gtpase), domain 3"/>
    <property type="match status" value="1"/>
</dbReference>
<dbReference type="Gene3D" id="3.40.50.300">
    <property type="entry name" value="P-loop containing nucleotide triphosphate hydrolases"/>
    <property type="match status" value="1"/>
</dbReference>
<dbReference type="Gene3D" id="2.40.30.10">
    <property type="entry name" value="Translation factors"/>
    <property type="match status" value="1"/>
</dbReference>
<dbReference type="HAMAP" id="MF_00849">
    <property type="entry name" value="BipA"/>
    <property type="match status" value="1"/>
</dbReference>
<dbReference type="InterPro" id="IPR006298">
    <property type="entry name" value="BipA"/>
</dbReference>
<dbReference type="InterPro" id="IPR048876">
    <property type="entry name" value="BipA_C"/>
</dbReference>
<dbReference type="InterPro" id="IPR047041">
    <property type="entry name" value="BipA_GTP-bd_dom"/>
</dbReference>
<dbReference type="InterPro" id="IPR047042">
    <property type="entry name" value="BipA_II"/>
</dbReference>
<dbReference type="InterPro" id="IPR047043">
    <property type="entry name" value="BipA_III"/>
</dbReference>
<dbReference type="InterPro" id="IPR035651">
    <property type="entry name" value="BipA_V"/>
</dbReference>
<dbReference type="InterPro" id="IPR035647">
    <property type="entry name" value="EFG_III/V"/>
</dbReference>
<dbReference type="InterPro" id="IPR000640">
    <property type="entry name" value="EFG_V-like"/>
</dbReference>
<dbReference type="InterPro" id="IPR004161">
    <property type="entry name" value="EFTu-like_2"/>
</dbReference>
<dbReference type="InterPro" id="IPR031157">
    <property type="entry name" value="G_TR_CS"/>
</dbReference>
<dbReference type="InterPro" id="IPR027417">
    <property type="entry name" value="P-loop_NTPase"/>
</dbReference>
<dbReference type="InterPro" id="IPR005225">
    <property type="entry name" value="Small_GTP-bd"/>
</dbReference>
<dbReference type="InterPro" id="IPR000795">
    <property type="entry name" value="T_Tr_GTP-bd_dom"/>
</dbReference>
<dbReference type="InterPro" id="IPR009000">
    <property type="entry name" value="Transl_B-barrel_sf"/>
</dbReference>
<dbReference type="InterPro" id="IPR042116">
    <property type="entry name" value="TypA/BipA_C"/>
</dbReference>
<dbReference type="NCBIfam" id="TIGR00231">
    <property type="entry name" value="small_GTP"/>
    <property type="match status" value="1"/>
</dbReference>
<dbReference type="NCBIfam" id="TIGR01394">
    <property type="entry name" value="TypA_BipA"/>
    <property type="match status" value="1"/>
</dbReference>
<dbReference type="PANTHER" id="PTHR42908:SF8">
    <property type="entry name" value="TR-TYPE G DOMAIN-CONTAINING PROTEIN"/>
    <property type="match status" value="1"/>
</dbReference>
<dbReference type="PANTHER" id="PTHR42908">
    <property type="entry name" value="TRANSLATION ELONGATION FACTOR-RELATED"/>
    <property type="match status" value="1"/>
</dbReference>
<dbReference type="Pfam" id="PF21018">
    <property type="entry name" value="BipA_C"/>
    <property type="match status" value="1"/>
</dbReference>
<dbReference type="Pfam" id="PF00679">
    <property type="entry name" value="EFG_C"/>
    <property type="match status" value="1"/>
</dbReference>
<dbReference type="Pfam" id="PF00009">
    <property type="entry name" value="GTP_EFTU"/>
    <property type="match status" value="1"/>
</dbReference>
<dbReference type="Pfam" id="PF03144">
    <property type="entry name" value="GTP_EFTU_D2"/>
    <property type="match status" value="1"/>
</dbReference>
<dbReference type="PRINTS" id="PR00315">
    <property type="entry name" value="ELONGATNFCT"/>
</dbReference>
<dbReference type="SUPFAM" id="SSF54980">
    <property type="entry name" value="EF-G C-terminal domain-like"/>
    <property type="match status" value="2"/>
</dbReference>
<dbReference type="SUPFAM" id="SSF52540">
    <property type="entry name" value="P-loop containing nucleoside triphosphate hydrolases"/>
    <property type="match status" value="1"/>
</dbReference>
<dbReference type="SUPFAM" id="SSF50447">
    <property type="entry name" value="Translation proteins"/>
    <property type="match status" value="1"/>
</dbReference>
<dbReference type="PROSITE" id="PS00301">
    <property type="entry name" value="G_TR_1"/>
    <property type="match status" value="1"/>
</dbReference>
<dbReference type="PROSITE" id="PS51722">
    <property type="entry name" value="G_TR_2"/>
    <property type="match status" value="1"/>
</dbReference>
<gene>
    <name evidence="1" type="primary">bipA</name>
    <name type="ordered locus">HI_0864</name>
</gene>
<protein>
    <recommendedName>
        <fullName evidence="1">Large ribosomal subunit assembly factor BipA</fullName>
        <ecNumber evidence="1">3.6.5.-</ecNumber>
    </recommendedName>
    <alternativeName>
        <fullName evidence="2">50S ribosomal subunit assembly factor BipA</fullName>
    </alternativeName>
    <alternativeName>
        <fullName evidence="1">GTP-binding protein BipA</fullName>
    </alternativeName>
</protein>
<name>BIPA_HAEIN</name>
<evidence type="ECO:0000255" key="1">
    <source>
        <dbReference type="HAMAP-Rule" id="MF_00849"/>
    </source>
</evidence>
<evidence type="ECO:0000305" key="2"/>
<comment type="function">
    <text evidence="1">A 50S ribosomal subunit assembly protein with GTPase activity, required for 50S subunit assembly at low temperatures, may also play a role in translation. Binds GTP and analogs. Binds the 70S ribosome between the 30S and 50S subunits, in a similar position as ribosome-bound EF-G; it contacts a number of ribosomal proteins, both rRNAs and the A-site tRNA.</text>
</comment>
<comment type="catalytic activity">
    <reaction evidence="1">
        <text>GTP + H2O = GDP + phosphate + H(+)</text>
        <dbReference type="Rhea" id="RHEA:19669"/>
        <dbReference type="ChEBI" id="CHEBI:15377"/>
        <dbReference type="ChEBI" id="CHEBI:15378"/>
        <dbReference type="ChEBI" id="CHEBI:37565"/>
        <dbReference type="ChEBI" id="CHEBI:43474"/>
        <dbReference type="ChEBI" id="CHEBI:58189"/>
    </reaction>
</comment>
<comment type="subunit">
    <text evidence="1">Monomer.</text>
</comment>
<comment type="subcellular location">
    <subcellularLocation>
        <location evidence="1">Cytoplasm</location>
    </subcellularLocation>
    <text evidence="1">Binds to ribosomes.</text>
</comment>
<comment type="similarity">
    <text evidence="1">Belongs to the TRAFAC class translation factor GTPase superfamily. Classic translation factor GTPase family. BipA subfamily.</text>
</comment>
<keyword id="KW-0963">Cytoplasm</keyword>
<keyword id="KW-0342">GTP-binding</keyword>
<keyword id="KW-0378">Hydrolase</keyword>
<keyword id="KW-0547">Nucleotide-binding</keyword>
<keyword id="KW-1185">Reference proteome</keyword>
<keyword id="KW-0690">Ribosome biogenesis</keyword>
<keyword id="KW-0694">RNA-binding</keyword>
<keyword id="KW-0699">rRNA-binding</keyword>
<keyword id="KW-0820">tRNA-binding</keyword>
<sequence length="616" mass="68470">MKNEIDIKKLRNIAIIAHVDHGKTTLVDKLLQQSGTFESARGDVDERVMDSNDLEKERGITILAKNTAINWNDYRINIVDTPGHADFGGEVERVLSMVDSVLLVVDAFDGPMPQTRFVTQKAFAHGLKPIVVINKVDRPGARPDWVVDQVFDLFVNLGASDEQLDFPIIYASALNGVAGLEHEDLAEDMTPLFEAIVKHVEPPKVELDAPFQMQISQLDYNNYVGVIGIGRIKRGSIKPNQPVTIINSEGKTRQGRIGQVLGHLGLQRYEEDVAYAGDIVAITGLGELNISDTICDINTVEALPSLTVDEPTVTMFFCVNTSPFAGQEGKYVTSRQILERLNKELVHNVALRVEETPNPDEFRVSGRGELHLSVLIENMRREGYELAVSRPKVIYRDIDGKKQEPYEQVTIDVEEQHQGSVMEALGIRKGEVRDMLPDGKGRVRLEYIIPSRGLIGFRGDFMTMTSGTGLLYSSFSHYDEIKGGEIGQRKNGVLISNATGKALGYALFGLQERGKLMIDANIEVYEGQIIGIHSRSNDLTVNCLQGKKLTNMRASGKDDAIVLTTPVKFSLEQAIEFIDDDELVEVTPESIRIRKKLLTENDRKRANRTTTSTSTH</sequence>